<comment type="miscellaneous">
    <text evidence="1">Partially overlaps CRN1.</text>
</comment>
<comment type="caution">
    <text evidence="2">Product of a dubious gene prediction unlikely to encode a functional protein. Because of that it is not part of the S.cerevisiae S288c complete/reference proteome set.</text>
</comment>
<feature type="chain" id="PRO_0000299649" description="Putative uncharacterized protein YLR428C">
    <location>
        <begin position="1"/>
        <end position="114"/>
    </location>
</feature>
<accession>O13564</accession>
<evidence type="ECO:0000305" key="1"/>
<evidence type="ECO:0000305" key="2">
    <source>
    </source>
</evidence>
<gene>
    <name type="ordered locus">YLR428C</name>
</gene>
<name>YL428_YEAST</name>
<dbReference type="EMBL" id="U20939">
    <property type="protein sequence ID" value="AAB67512.1"/>
    <property type="molecule type" value="Genomic_DNA"/>
</dbReference>
<dbReference type="PIR" id="S69320">
    <property type="entry name" value="S69320"/>
</dbReference>
<dbReference type="DIP" id="DIP-2773N"/>
<dbReference type="IntAct" id="O13564">
    <property type="interactions" value="1"/>
</dbReference>
<dbReference type="MINT" id="O13564"/>
<dbReference type="PaxDb" id="4932-YLR428C"/>
<dbReference type="EnsemblFungi" id="YLR428C_mRNA">
    <property type="protein sequence ID" value="YLR428C"/>
    <property type="gene ID" value="YLR428C"/>
</dbReference>
<dbReference type="AGR" id="SGD:S000004420"/>
<dbReference type="SGD" id="S000004420">
    <property type="gene designation" value="YLR428C"/>
</dbReference>
<dbReference type="HOGENOM" id="CLU_2122980_0_0_1"/>
<proteinExistence type="uncertain"/>
<organism>
    <name type="scientific">Saccharomyces cerevisiae (strain ATCC 204508 / S288c)</name>
    <name type="common">Baker's yeast</name>
    <dbReference type="NCBI Taxonomy" id="559292"/>
    <lineage>
        <taxon>Eukaryota</taxon>
        <taxon>Fungi</taxon>
        <taxon>Dikarya</taxon>
        <taxon>Ascomycota</taxon>
        <taxon>Saccharomycotina</taxon>
        <taxon>Saccharomycetes</taxon>
        <taxon>Saccharomycetales</taxon>
        <taxon>Saccharomycetaceae</taxon>
        <taxon>Saccharomyces</taxon>
    </lineage>
</organism>
<protein>
    <recommendedName>
        <fullName>Putative uncharacterized protein YLR428C</fullName>
    </recommendedName>
</protein>
<sequence>MTANAPPPEAFQFTAINLPFVFSKLESHALLVTLSFSYCSSFLAAWPKTCLYLEARTNFPLILRPSKWSVSFIPFSLYSFDIRVHESTLFSSRVKIISPKFYLRSKVKNHAQRH</sequence>
<reference key="1">
    <citation type="journal article" date="1997" name="Nature">
        <title>The nucleotide sequence of Saccharomyces cerevisiae chromosome XII.</title>
        <authorList>
            <person name="Johnston M."/>
            <person name="Hillier L.W."/>
            <person name="Riles L."/>
            <person name="Albermann K."/>
            <person name="Andre B."/>
            <person name="Ansorge W."/>
            <person name="Benes V."/>
            <person name="Brueckner M."/>
            <person name="Delius H."/>
            <person name="Dubois E."/>
            <person name="Duesterhoeft A."/>
            <person name="Entian K.-D."/>
            <person name="Floeth M."/>
            <person name="Goffeau A."/>
            <person name="Hebling U."/>
            <person name="Heumann K."/>
            <person name="Heuss-Neitzel D."/>
            <person name="Hilbert H."/>
            <person name="Hilger F."/>
            <person name="Kleine K."/>
            <person name="Koetter P."/>
            <person name="Louis E.J."/>
            <person name="Messenguy F."/>
            <person name="Mewes H.-W."/>
            <person name="Miosga T."/>
            <person name="Moestl D."/>
            <person name="Mueller-Auer S."/>
            <person name="Nentwich U."/>
            <person name="Obermaier B."/>
            <person name="Piravandi E."/>
            <person name="Pohl T.M."/>
            <person name="Portetelle D."/>
            <person name="Purnelle B."/>
            <person name="Rechmann S."/>
            <person name="Rieger M."/>
            <person name="Rinke M."/>
            <person name="Rose M."/>
            <person name="Scharfe M."/>
            <person name="Scherens B."/>
            <person name="Scholler P."/>
            <person name="Schwager C."/>
            <person name="Schwarz S."/>
            <person name="Underwood A.P."/>
            <person name="Urrestarazu L.A."/>
            <person name="Vandenbol M."/>
            <person name="Verhasselt P."/>
            <person name="Vierendeels F."/>
            <person name="Voet M."/>
            <person name="Volckaert G."/>
            <person name="Voss H."/>
            <person name="Wambutt R."/>
            <person name="Wedler E."/>
            <person name="Wedler H."/>
            <person name="Zimmermann F.K."/>
            <person name="Zollner A."/>
            <person name="Hani J."/>
            <person name="Hoheisel J.D."/>
        </authorList>
    </citation>
    <scope>NUCLEOTIDE SEQUENCE [LARGE SCALE GENOMIC DNA]</scope>
    <source>
        <strain>ATCC 204508 / S288c</strain>
    </source>
</reference>
<reference key="2">
    <citation type="journal article" date="2014" name="G3 (Bethesda)">
        <title>The reference genome sequence of Saccharomyces cerevisiae: Then and now.</title>
        <authorList>
            <person name="Engel S.R."/>
            <person name="Dietrich F.S."/>
            <person name="Fisk D.G."/>
            <person name="Binkley G."/>
            <person name="Balakrishnan R."/>
            <person name="Costanzo M.C."/>
            <person name="Dwight S.S."/>
            <person name="Hitz B.C."/>
            <person name="Karra K."/>
            <person name="Nash R.S."/>
            <person name="Weng S."/>
            <person name="Wong E.D."/>
            <person name="Lloyd P."/>
            <person name="Skrzypek M.S."/>
            <person name="Miyasato S.R."/>
            <person name="Simison M."/>
            <person name="Cherry J.M."/>
        </authorList>
    </citation>
    <scope>GENOME REANNOTATION</scope>
    <source>
        <strain>ATCC 204508 / S288c</strain>
    </source>
</reference>